<proteinExistence type="inferred from homology"/>
<reference key="1">
    <citation type="journal article" date="2012" name="Stand. Genomic Sci.">
        <title>Complete genome sequence of Polynucleobacter necessarius subsp. asymbioticus type strain (QLW-P1DMWA-1(T)).</title>
        <authorList>
            <person name="Meincke L."/>
            <person name="Copeland A."/>
            <person name="Lapidus A."/>
            <person name="Lucas S."/>
            <person name="Berry K.W."/>
            <person name="Del Rio T.G."/>
            <person name="Hammon N."/>
            <person name="Dalin E."/>
            <person name="Tice H."/>
            <person name="Pitluck S."/>
            <person name="Richardson P."/>
            <person name="Bruce D."/>
            <person name="Goodwin L."/>
            <person name="Han C."/>
            <person name="Tapia R."/>
            <person name="Detter J.C."/>
            <person name="Schmutz J."/>
            <person name="Brettin T."/>
            <person name="Larimer F."/>
            <person name="Land M."/>
            <person name="Hauser L."/>
            <person name="Kyrpides N.C."/>
            <person name="Ivanova N."/>
            <person name="Goker M."/>
            <person name="Woyke T."/>
            <person name="Wu Q.L."/>
            <person name="Pockl M."/>
            <person name="Hahn M.W."/>
            <person name="Klenk H.P."/>
        </authorList>
    </citation>
    <scope>NUCLEOTIDE SEQUENCE [LARGE SCALE GENOMIC DNA]</scope>
    <source>
        <strain>DSM 18221 / CIP 109841 / QLW-P1DMWA-1</strain>
    </source>
</reference>
<dbReference type="EMBL" id="CP000655">
    <property type="protein sequence ID" value="ABP34477.1"/>
    <property type="molecule type" value="Genomic_DNA"/>
</dbReference>
<dbReference type="RefSeq" id="WP_011903102.1">
    <property type="nucleotide sequence ID" value="NC_009379.1"/>
</dbReference>
<dbReference type="SMR" id="A4SYB3"/>
<dbReference type="GeneID" id="31481650"/>
<dbReference type="KEGG" id="pnu:Pnuc_1263"/>
<dbReference type="eggNOG" id="COG2924">
    <property type="taxonomic scope" value="Bacteria"/>
</dbReference>
<dbReference type="HOGENOM" id="CLU_170994_0_0_4"/>
<dbReference type="Proteomes" id="UP000000231">
    <property type="component" value="Chromosome"/>
</dbReference>
<dbReference type="GO" id="GO:0005829">
    <property type="term" value="C:cytosol"/>
    <property type="evidence" value="ECO:0007669"/>
    <property type="project" value="TreeGrafter"/>
</dbReference>
<dbReference type="GO" id="GO:0005506">
    <property type="term" value="F:iron ion binding"/>
    <property type="evidence" value="ECO:0007669"/>
    <property type="project" value="UniProtKB-UniRule"/>
</dbReference>
<dbReference type="GO" id="GO:0034599">
    <property type="term" value="P:cellular response to oxidative stress"/>
    <property type="evidence" value="ECO:0007669"/>
    <property type="project" value="TreeGrafter"/>
</dbReference>
<dbReference type="FunFam" id="1.10.3880.10:FF:000001">
    <property type="entry name" value="Probable Fe(2+)-trafficking protein"/>
    <property type="match status" value="1"/>
</dbReference>
<dbReference type="Gene3D" id="1.10.3880.10">
    <property type="entry name" value="Fe(II) trafficking protein YggX"/>
    <property type="match status" value="1"/>
</dbReference>
<dbReference type="HAMAP" id="MF_00686">
    <property type="entry name" value="Fe_traffic_YggX"/>
    <property type="match status" value="1"/>
</dbReference>
<dbReference type="InterPro" id="IPR007457">
    <property type="entry name" value="Fe_traffick_prot_YggX"/>
</dbReference>
<dbReference type="InterPro" id="IPR036766">
    <property type="entry name" value="Fe_traffick_prot_YggX_sf"/>
</dbReference>
<dbReference type="NCBIfam" id="NF003817">
    <property type="entry name" value="PRK05408.1"/>
    <property type="match status" value="1"/>
</dbReference>
<dbReference type="PANTHER" id="PTHR36965">
    <property type="entry name" value="FE(2+)-TRAFFICKING PROTEIN-RELATED"/>
    <property type="match status" value="1"/>
</dbReference>
<dbReference type="PANTHER" id="PTHR36965:SF1">
    <property type="entry name" value="FE(2+)-TRAFFICKING PROTEIN-RELATED"/>
    <property type="match status" value="1"/>
</dbReference>
<dbReference type="Pfam" id="PF04362">
    <property type="entry name" value="Iron_traffic"/>
    <property type="match status" value="1"/>
</dbReference>
<dbReference type="PIRSF" id="PIRSF029827">
    <property type="entry name" value="Fe_traffic_YggX"/>
    <property type="match status" value="1"/>
</dbReference>
<dbReference type="SUPFAM" id="SSF111148">
    <property type="entry name" value="YggX-like"/>
    <property type="match status" value="1"/>
</dbReference>
<protein>
    <recommendedName>
        <fullName evidence="1">Probable Fe(2+)-trafficking protein</fullName>
    </recommendedName>
</protein>
<name>FETP_POLAQ</name>
<organism>
    <name type="scientific">Polynucleobacter asymbioticus (strain DSM 18221 / CIP 109841 / QLW-P1DMWA-1)</name>
    <name type="common">Polynucleobacter necessarius subsp. asymbioticus</name>
    <dbReference type="NCBI Taxonomy" id="312153"/>
    <lineage>
        <taxon>Bacteria</taxon>
        <taxon>Pseudomonadati</taxon>
        <taxon>Pseudomonadota</taxon>
        <taxon>Betaproteobacteria</taxon>
        <taxon>Burkholderiales</taxon>
        <taxon>Burkholderiaceae</taxon>
        <taxon>Polynucleobacter</taxon>
    </lineage>
</organism>
<keyword id="KW-0408">Iron</keyword>
<keyword id="KW-1185">Reference proteome</keyword>
<comment type="function">
    <text evidence="1">Could be a mediator in iron transactions between iron acquisition and iron-requiring processes, such as synthesis and/or repair of Fe-S clusters in biosynthetic enzymes.</text>
</comment>
<comment type="similarity">
    <text evidence="1">Belongs to the Fe(2+)-trafficking protein family.</text>
</comment>
<gene>
    <name type="ordered locus">Pnuc_1263</name>
</gene>
<sequence length="90" mass="10365">MARMVQCIKLNKEAEGMDFAPLPGELGKKIWNQVSKEAWAAWLKQQTMLINENRLNMADPRARQYLLKQVEKYFFEGGADMAQGYVPEAE</sequence>
<feature type="chain" id="PRO_1000083080" description="Probable Fe(2+)-trafficking protein">
    <location>
        <begin position="1"/>
        <end position="90"/>
    </location>
</feature>
<accession>A4SYB3</accession>
<evidence type="ECO:0000255" key="1">
    <source>
        <dbReference type="HAMAP-Rule" id="MF_00686"/>
    </source>
</evidence>